<comment type="function">
    <text evidence="1">Catalyzes the prenylation of para-hydroxybenzoate (PHB) with an all-trans polyprenyl group. Mediates the second step in the final reaction sequence of ubiquinone-8 (UQ-8) biosynthesis, which is the condensation of the polyisoprenoid side chain with PHB, generating the first membrane-bound Q intermediate 3-octaprenyl-4-hydroxybenzoate.</text>
</comment>
<comment type="catalytic activity">
    <reaction evidence="1">
        <text>all-trans-octaprenyl diphosphate + 4-hydroxybenzoate = 4-hydroxy-3-(all-trans-octaprenyl)benzoate + diphosphate</text>
        <dbReference type="Rhea" id="RHEA:27782"/>
        <dbReference type="ChEBI" id="CHEBI:1617"/>
        <dbReference type="ChEBI" id="CHEBI:17879"/>
        <dbReference type="ChEBI" id="CHEBI:33019"/>
        <dbReference type="ChEBI" id="CHEBI:57711"/>
        <dbReference type="EC" id="2.5.1.39"/>
    </reaction>
</comment>
<comment type="cofactor">
    <cofactor evidence="1">
        <name>Mg(2+)</name>
        <dbReference type="ChEBI" id="CHEBI:18420"/>
    </cofactor>
</comment>
<comment type="pathway">
    <text evidence="1">Cofactor biosynthesis; ubiquinone biosynthesis.</text>
</comment>
<comment type="subcellular location">
    <subcellularLocation>
        <location evidence="1">Cell inner membrane</location>
        <topology evidence="1">Multi-pass membrane protein</topology>
    </subcellularLocation>
</comment>
<comment type="similarity">
    <text evidence="1">Belongs to the UbiA prenyltransferase family.</text>
</comment>
<protein>
    <recommendedName>
        <fullName evidence="1">4-hydroxybenzoate octaprenyltransferase</fullName>
        <ecNumber evidence="1">2.5.1.39</ecNumber>
    </recommendedName>
    <alternativeName>
        <fullName evidence="1">4-HB polyprenyltransferase</fullName>
    </alternativeName>
</protein>
<keyword id="KW-0997">Cell inner membrane</keyword>
<keyword id="KW-1003">Cell membrane</keyword>
<keyword id="KW-0460">Magnesium</keyword>
<keyword id="KW-0472">Membrane</keyword>
<keyword id="KW-0808">Transferase</keyword>
<keyword id="KW-0812">Transmembrane</keyword>
<keyword id="KW-1133">Transmembrane helix</keyword>
<keyword id="KW-0831">Ubiquinone biosynthesis</keyword>
<reference key="1">
    <citation type="journal article" date="2009" name="Infect. Immun.">
        <title>Comparative genomics reveal extensive transposon-mediated genomic plasticity and diversity among potential effector proteins within the genus Coxiella.</title>
        <authorList>
            <person name="Beare P.A."/>
            <person name="Unsworth N."/>
            <person name="Andoh M."/>
            <person name="Voth D.E."/>
            <person name="Omsland A."/>
            <person name="Gilk S.D."/>
            <person name="Williams K.P."/>
            <person name="Sobral B.W."/>
            <person name="Kupko J.J. III"/>
            <person name="Porcella S.F."/>
            <person name="Samuel J.E."/>
            <person name="Heinzen R.A."/>
        </authorList>
    </citation>
    <scope>NUCLEOTIDE SEQUENCE [LARGE SCALE GENOMIC DNA]</scope>
    <source>
        <strain>CbuG_Q212</strain>
    </source>
</reference>
<proteinExistence type="inferred from homology"/>
<dbReference type="EC" id="2.5.1.39" evidence="1"/>
<dbReference type="EMBL" id="CP001019">
    <property type="protein sequence ID" value="ACJ19200.1"/>
    <property type="molecule type" value="Genomic_DNA"/>
</dbReference>
<dbReference type="RefSeq" id="WP_005772835.1">
    <property type="nucleotide sequence ID" value="NC_011527.1"/>
</dbReference>
<dbReference type="SMR" id="B6J375"/>
<dbReference type="KEGG" id="cbg:CbuG_1957"/>
<dbReference type="HOGENOM" id="CLU_034879_1_0_6"/>
<dbReference type="UniPathway" id="UPA00232"/>
<dbReference type="GO" id="GO:0005886">
    <property type="term" value="C:plasma membrane"/>
    <property type="evidence" value="ECO:0007669"/>
    <property type="project" value="UniProtKB-SubCell"/>
</dbReference>
<dbReference type="GO" id="GO:0008412">
    <property type="term" value="F:4-hydroxybenzoate polyprenyltransferase activity"/>
    <property type="evidence" value="ECO:0007669"/>
    <property type="project" value="UniProtKB-UniRule"/>
</dbReference>
<dbReference type="GO" id="GO:0006744">
    <property type="term" value="P:ubiquinone biosynthetic process"/>
    <property type="evidence" value="ECO:0007669"/>
    <property type="project" value="UniProtKB-UniRule"/>
</dbReference>
<dbReference type="CDD" id="cd13959">
    <property type="entry name" value="PT_UbiA_COQ2"/>
    <property type="match status" value="1"/>
</dbReference>
<dbReference type="FunFam" id="1.10.357.140:FF:000002">
    <property type="entry name" value="4-hydroxybenzoate octaprenyltransferase"/>
    <property type="match status" value="1"/>
</dbReference>
<dbReference type="FunFam" id="1.20.120.1780:FF:000001">
    <property type="entry name" value="4-hydroxybenzoate octaprenyltransferase"/>
    <property type="match status" value="1"/>
</dbReference>
<dbReference type="Gene3D" id="1.10.357.140">
    <property type="entry name" value="UbiA prenyltransferase"/>
    <property type="match status" value="1"/>
</dbReference>
<dbReference type="Gene3D" id="1.20.120.1780">
    <property type="entry name" value="UbiA prenyltransferase"/>
    <property type="match status" value="1"/>
</dbReference>
<dbReference type="HAMAP" id="MF_01635">
    <property type="entry name" value="UbiA"/>
    <property type="match status" value="1"/>
</dbReference>
<dbReference type="InterPro" id="IPR006370">
    <property type="entry name" value="HB_polyprenyltransferase-like"/>
</dbReference>
<dbReference type="InterPro" id="IPR039653">
    <property type="entry name" value="Prenyltransferase"/>
</dbReference>
<dbReference type="InterPro" id="IPR000537">
    <property type="entry name" value="UbiA_prenyltransferase"/>
</dbReference>
<dbReference type="InterPro" id="IPR030470">
    <property type="entry name" value="UbiA_prenylTrfase_CS"/>
</dbReference>
<dbReference type="InterPro" id="IPR044878">
    <property type="entry name" value="UbiA_sf"/>
</dbReference>
<dbReference type="NCBIfam" id="TIGR01474">
    <property type="entry name" value="ubiA_proteo"/>
    <property type="match status" value="1"/>
</dbReference>
<dbReference type="PANTHER" id="PTHR11048:SF28">
    <property type="entry name" value="4-HYDROXYBENZOATE POLYPRENYLTRANSFERASE, MITOCHONDRIAL"/>
    <property type="match status" value="1"/>
</dbReference>
<dbReference type="PANTHER" id="PTHR11048">
    <property type="entry name" value="PRENYLTRANSFERASES"/>
    <property type="match status" value="1"/>
</dbReference>
<dbReference type="Pfam" id="PF01040">
    <property type="entry name" value="UbiA"/>
    <property type="match status" value="1"/>
</dbReference>
<dbReference type="PROSITE" id="PS00943">
    <property type="entry name" value="UBIA"/>
    <property type="match status" value="1"/>
</dbReference>
<gene>
    <name evidence="1" type="primary">ubiA</name>
    <name type="ordered locus">CbuG_1957</name>
</gene>
<organism>
    <name type="scientific">Coxiella burnetii (strain CbuG_Q212)</name>
    <name type="common">Coxiella burnetii (strain Q212)</name>
    <dbReference type="NCBI Taxonomy" id="434923"/>
    <lineage>
        <taxon>Bacteria</taxon>
        <taxon>Pseudomonadati</taxon>
        <taxon>Pseudomonadota</taxon>
        <taxon>Gammaproteobacteria</taxon>
        <taxon>Legionellales</taxon>
        <taxon>Coxiellaceae</taxon>
        <taxon>Coxiella</taxon>
    </lineage>
</organism>
<accession>B6J375</accession>
<feature type="chain" id="PRO_1000186661" description="4-hydroxybenzoate octaprenyltransferase">
    <location>
        <begin position="1"/>
        <end position="287"/>
    </location>
</feature>
<feature type="transmembrane region" description="Helical" evidence="1">
    <location>
        <begin position="21"/>
        <end position="41"/>
    </location>
</feature>
<feature type="transmembrane region" description="Helical" evidence="1">
    <location>
        <begin position="44"/>
        <end position="64"/>
    </location>
</feature>
<feature type="transmembrane region" description="Helical" evidence="1">
    <location>
        <begin position="91"/>
        <end position="111"/>
    </location>
</feature>
<feature type="transmembrane region" description="Helical" evidence="1">
    <location>
        <begin position="112"/>
        <end position="132"/>
    </location>
</feature>
<feature type="transmembrane region" description="Helical" evidence="1">
    <location>
        <begin position="139"/>
        <end position="159"/>
    </location>
</feature>
<feature type="transmembrane region" description="Helical" evidence="1">
    <location>
        <begin position="160"/>
        <end position="180"/>
    </location>
</feature>
<feature type="transmembrane region" description="Helical" evidence="1">
    <location>
        <begin position="211"/>
        <end position="231"/>
    </location>
</feature>
<feature type="transmembrane region" description="Helical" evidence="1">
    <location>
        <begin position="235"/>
        <end position="255"/>
    </location>
</feature>
<feature type="transmembrane region" description="Helical" evidence="1">
    <location>
        <begin position="263"/>
        <end position="283"/>
    </location>
</feature>
<sequence length="287" mass="32738">MINLRQQMPHYLRLMRFDKPVGIFLLLWPTLWAVWIAAKGAPSFKIAVIFIAGSVVMRAAGCIVNDFADRHLDKHVQRTQMRPLASGSVSVTEAMLLFAVLSLIAFTLVLLLNRLTVELAVIGILLALVYPFLKRFTHLPQLWLGVAFSWSIPMAFAATVGHVPAVAWLLFFAAVLWPIVYDTQYAMIDREDDVKVGIKSTAILFGRYDRLMIGLLQGSVLLTFGLLGWYLRFNYWFYLGLLVALGLMCYQQFLIRHRKPPDCFAAFRNNNWVGFFIFLGILLTYRN</sequence>
<name>UBIA_COXB2</name>
<evidence type="ECO:0000255" key="1">
    <source>
        <dbReference type="HAMAP-Rule" id="MF_01635"/>
    </source>
</evidence>